<evidence type="ECO:0000255" key="1">
    <source>
        <dbReference type="PROSITE-ProRule" id="PRU00711"/>
    </source>
</evidence>
<evidence type="ECO:0000269" key="2">
    <source>
    </source>
</evidence>
<evidence type="ECO:0000303" key="3">
    <source>
    </source>
</evidence>
<evidence type="ECO:0000305" key="4"/>
<evidence type="ECO:0000305" key="5">
    <source>
    </source>
</evidence>
<evidence type="ECO:0000312" key="6">
    <source>
        <dbReference type="EMBL" id="AAL81603.1"/>
    </source>
</evidence>
<evidence type="ECO:0000312" key="7">
    <source>
        <dbReference type="EMBL" id="QEK79108.1"/>
    </source>
</evidence>
<evidence type="ECO:0007744" key="8">
    <source>
        <dbReference type="PDB" id="6X1O"/>
    </source>
</evidence>
<evidence type="ECO:0007744" key="9">
    <source>
        <dbReference type="PDB" id="6X6U"/>
    </source>
</evidence>
<keyword id="KW-0002">3D-structure</keyword>
<keyword id="KW-0004">4Fe-4S</keyword>
<keyword id="KW-0963">Cytoplasm</keyword>
<keyword id="KW-0249">Electron transport</keyword>
<keyword id="KW-0408">Iron</keyword>
<keyword id="KW-0411">Iron-sulfur</keyword>
<keyword id="KW-0479">Metal-binding</keyword>
<keyword id="KW-1185">Reference proteome</keyword>
<keyword id="KW-0813">Transport</keyword>
<accession>Q8U0V2</accession>
<accession>A0A5C0XS91</accession>
<proteinExistence type="evidence at protein level"/>
<comment type="function">
    <text evidence="2 5">Polyferredoxin-like subunit of an oxidoreductase that can desulfonate and oxidize aliphatic sulfonates such as taurine (PubMed:36269456). May serve as a an electron-transfer subunit between the catalytic subunit and ferredoxin (Probable).</text>
</comment>
<comment type="cofactor">
    <cofactor evidence="2">
        <name>[4Fe-4S] cluster</name>
        <dbReference type="ChEBI" id="CHEBI:49883"/>
    </cofactor>
    <text evidence="2">Binds 4 [4Fe-4S] clusters per subunit.</text>
</comment>
<comment type="subunit">
    <text evidence="2">Heterodimer composed of a small WOR5-S subunit, with four [4Fe-4S] clusters, and a large WOR5-L subunit, containing the active site tungsto-bispyranopterin cofactor as well as another [4Fe-4S] cluster.</text>
</comment>
<comment type="subcellular location">
    <subcellularLocation>
        <location evidence="2">Cytoplasm</location>
    </subcellularLocation>
</comment>
<sequence>MSEEVQERIWILITPDKCSGCRLCEVTCSLEHEGIIWPEASRIRVFELFPGINVPHTCVQCPDYPCVNACPTNALSVDEKTGAVVVNEEKCITCGACVLACPGKVPRIPAGKGSVVICDLCGGNPKCVEICHEAGHDALKIVTGNYRPIYRTFAKDPQEKSLDIARKVFGEDF</sequence>
<gene>
    <name evidence="6" type="ordered locus">PF1479</name>
    <name evidence="7" type="ORF">PFDSM3638_07415</name>
</gene>
<protein>
    <recommendedName>
        <fullName evidence="4">Aliphatic sulfonate oxidoreductase, polyferredoxin-like subunit</fullName>
    </recommendedName>
    <alternativeName>
        <fullName evidence="3">Polyferredoxin-like protein</fullName>
    </alternativeName>
    <alternativeName>
        <fullName evidence="3">WOR5 small subunit</fullName>
        <shortName evidence="3">WOR5-S</shortName>
    </alternativeName>
</protein>
<reference evidence="6" key="1">
    <citation type="journal article" date="1999" name="Genetics">
        <title>Divergence of the hyperthermophilic archaea Pyrococcus furiosus and P. horikoshii inferred from complete genomic sequences.</title>
        <authorList>
            <person name="Maeder D.L."/>
            <person name="Weiss R.B."/>
            <person name="Dunn D.M."/>
            <person name="Cherry J.L."/>
            <person name="Gonzalez J.M."/>
            <person name="DiRuggiero J."/>
            <person name="Robb F.T."/>
        </authorList>
    </citation>
    <scope>NUCLEOTIDE SEQUENCE [LARGE SCALE GENOMIC DNA]</scope>
    <source>
        <strain>ATCC 43587 / DSM 3638 / JCM 8422 / Vc1</strain>
    </source>
</reference>
<reference evidence="7" key="2">
    <citation type="submission" date="2017-08" db="EMBL/GenBank/DDBJ databases">
        <title>Resequencing and Reannotation of the genome of Pyrococcus furiosus type strain DSM3638.</title>
        <authorList>
            <person name="Reichelt R.M."/>
            <person name="Bunk B."/>
        </authorList>
    </citation>
    <scope>NUCLEOTIDE SEQUENCE [LARGE SCALE GENOMIC DNA]</scope>
    <source>
        <strain>ATCC 43587 / DSM 3638 / JCM 8422 / Vc1</strain>
    </source>
</reference>
<reference evidence="8 9" key="3">
    <citation type="journal article" date="2022" name="J. Biol. Inorg. Chem.">
        <title>An unprecedented function for a tungsten-containing oxidoreductase.</title>
        <authorList>
            <person name="Mathew L.G."/>
            <person name="Haja D.K."/>
            <person name="Pritchett C."/>
            <person name="McCormick W."/>
            <person name="Zeineddine R."/>
            <person name="Fontenot L.S."/>
            <person name="Rivera M.E."/>
            <person name="Glushka J."/>
            <person name="Adams M.W.W."/>
            <person name="Lanzilotta W.N."/>
        </authorList>
    </citation>
    <scope>X-RAY CRYSTALLOGRAPHY (1.94 ANGSTROMS) IN COMPLEX WITH IRON-SULFUR (4FE-4S) CLUSTERS</scope>
    <scope>FUNCTION</scope>
    <scope>COFACTOR</scope>
    <scope>SUBUNIT</scope>
    <scope>SUBCELLULAR LOCATION</scope>
    <source>
        <strain>COM1</strain>
    </source>
</reference>
<dbReference type="EMBL" id="AE009950">
    <property type="protein sequence ID" value="AAL81603.1"/>
    <property type="molecule type" value="Genomic_DNA"/>
</dbReference>
<dbReference type="EMBL" id="CP023154">
    <property type="protein sequence ID" value="QEK79108.1"/>
    <property type="molecule type" value="Genomic_DNA"/>
</dbReference>
<dbReference type="RefSeq" id="WP_011012626.1">
    <property type="nucleotide sequence ID" value="NZ_CP023154.1"/>
</dbReference>
<dbReference type="PDB" id="6X1O">
    <property type="method" value="X-ray"/>
    <property type="resolution" value="2.09 A"/>
    <property type="chains" value="B/D=9-173"/>
</dbReference>
<dbReference type="PDB" id="6X6U">
    <property type="method" value="X-ray"/>
    <property type="resolution" value="1.94 A"/>
    <property type="chains" value="B/D=1-173"/>
</dbReference>
<dbReference type="PDBsum" id="6X1O"/>
<dbReference type="PDBsum" id="6X6U"/>
<dbReference type="SMR" id="Q8U0V2"/>
<dbReference type="STRING" id="186497.PF1479"/>
<dbReference type="PaxDb" id="186497-PF1479"/>
<dbReference type="GeneID" id="41713291"/>
<dbReference type="KEGG" id="pfu:PF1479"/>
<dbReference type="PATRIC" id="fig|186497.12.peg.1542"/>
<dbReference type="eggNOG" id="arCOG01502">
    <property type="taxonomic scope" value="Archaea"/>
</dbReference>
<dbReference type="HOGENOM" id="CLU_043374_3_2_2"/>
<dbReference type="OrthoDB" id="2837at2157"/>
<dbReference type="PhylomeDB" id="Q8U0V2"/>
<dbReference type="Proteomes" id="UP000001013">
    <property type="component" value="Chromosome"/>
</dbReference>
<dbReference type="Proteomes" id="UP000324354">
    <property type="component" value="Chromosome"/>
</dbReference>
<dbReference type="GO" id="GO:0005737">
    <property type="term" value="C:cytoplasm"/>
    <property type="evidence" value="ECO:0007669"/>
    <property type="project" value="UniProtKB-SubCell"/>
</dbReference>
<dbReference type="GO" id="GO:0051539">
    <property type="term" value="F:4 iron, 4 sulfur cluster binding"/>
    <property type="evidence" value="ECO:0007669"/>
    <property type="project" value="UniProtKB-KW"/>
</dbReference>
<dbReference type="GO" id="GO:0046872">
    <property type="term" value="F:metal ion binding"/>
    <property type="evidence" value="ECO:0007669"/>
    <property type="project" value="UniProtKB-KW"/>
</dbReference>
<dbReference type="GO" id="GO:0016491">
    <property type="term" value="F:oxidoreductase activity"/>
    <property type="evidence" value="ECO:0007669"/>
    <property type="project" value="UniProtKB-ARBA"/>
</dbReference>
<dbReference type="CDD" id="cd10550">
    <property type="entry name" value="DMSOR_beta_like"/>
    <property type="match status" value="1"/>
</dbReference>
<dbReference type="Gene3D" id="3.30.70.20">
    <property type="match status" value="2"/>
</dbReference>
<dbReference type="InterPro" id="IPR017896">
    <property type="entry name" value="4Fe4S_Fe-S-bd"/>
</dbReference>
<dbReference type="InterPro" id="IPR017900">
    <property type="entry name" value="4Fe4S_Fe_S_CS"/>
</dbReference>
<dbReference type="InterPro" id="IPR050294">
    <property type="entry name" value="RnfB_subfamily"/>
</dbReference>
<dbReference type="PANTHER" id="PTHR42859:SF10">
    <property type="entry name" value="DIMETHYLSULFOXIDE REDUCTASE CHAIN B"/>
    <property type="match status" value="1"/>
</dbReference>
<dbReference type="PANTHER" id="PTHR42859">
    <property type="entry name" value="OXIDOREDUCTASE"/>
    <property type="match status" value="1"/>
</dbReference>
<dbReference type="Pfam" id="PF13247">
    <property type="entry name" value="Fer4_11"/>
    <property type="match status" value="1"/>
</dbReference>
<dbReference type="Pfam" id="PF12800">
    <property type="entry name" value="Fer4_4"/>
    <property type="match status" value="1"/>
</dbReference>
<dbReference type="SUPFAM" id="SSF54862">
    <property type="entry name" value="4Fe-4S ferredoxins"/>
    <property type="match status" value="1"/>
</dbReference>
<dbReference type="PROSITE" id="PS00198">
    <property type="entry name" value="4FE4S_FER_1"/>
    <property type="match status" value="1"/>
</dbReference>
<dbReference type="PROSITE" id="PS51379">
    <property type="entry name" value="4FE4S_FER_2"/>
    <property type="match status" value="3"/>
</dbReference>
<organism>
    <name type="scientific">Pyrococcus furiosus (strain ATCC 43587 / DSM 3638 / JCM 8422 / Vc1)</name>
    <dbReference type="NCBI Taxonomy" id="186497"/>
    <lineage>
        <taxon>Archaea</taxon>
        <taxon>Methanobacteriati</taxon>
        <taxon>Methanobacteriota</taxon>
        <taxon>Thermococci</taxon>
        <taxon>Thermococcales</taxon>
        <taxon>Thermococcaceae</taxon>
        <taxon>Pyrococcus</taxon>
    </lineage>
</organism>
<name>ASORS_PYRFU</name>
<feature type="chain" id="PRO_0000461706" description="Aliphatic sulfonate oxidoreductase, polyferredoxin-like subunit">
    <location>
        <begin position="1"/>
        <end position="173"/>
    </location>
</feature>
<feature type="domain" description="4Fe-4S ferredoxin-type 1" evidence="1">
    <location>
        <begin position="9"/>
        <end position="40"/>
    </location>
</feature>
<feature type="domain" description="4Fe-4S ferredoxin-type 2" evidence="1">
    <location>
        <begin position="48"/>
        <end position="80"/>
    </location>
</feature>
<feature type="domain" description="4Fe-4S ferredoxin-type 3" evidence="1">
    <location>
        <begin position="82"/>
        <end position="111"/>
    </location>
</feature>
<feature type="binding site" evidence="2 8 9">
    <location>
        <position position="18"/>
    </location>
    <ligand>
        <name>[4Fe-4S] cluster</name>
        <dbReference type="ChEBI" id="CHEBI:49883"/>
        <label>1</label>
    </ligand>
</feature>
<feature type="binding site" evidence="2 8 9">
    <location>
        <position position="21"/>
    </location>
    <ligand>
        <name>[4Fe-4S] cluster</name>
        <dbReference type="ChEBI" id="CHEBI:49883"/>
        <label>1</label>
    </ligand>
</feature>
<feature type="binding site" evidence="2 8 9">
    <location>
        <position position="24"/>
    </location>
    <ligand>
        <name>[4Fe-4S] cluster</name>
        <dbReference type="ChEBI" id="CHEBI:49883"/>
        <label>1</label>
    </ligand>
</feature>
<feature type="binding site" evidence="2 8 9">
    <location>
        <position position="28"/>
    </location>
    <ligand>
        <name>[4Fe-4S] cluster</name>
        <dbReference type="ChEBI" id="CHEBI:49883"/>
        <label>2</label>
    </ligand>
</feature>
<feature type="binding site" evidence="2 8 9">
    <location>
        <position position="58"/>
    </location>
    <ligand>
        <name>[4Fe-4S] cluster</name>
        <dbReference type="ChEBI" id="CHEBI:49883"/>
        <label>3</label>
    </ligand>
</feature>
<feature type="binding site" evidence="2 8 9">
    <location>
        <position position="61"/>
    </location>
    <ligand>
        <name>[4Fe-4S] cluster</name>
        <dbReference type="ChEBI" id="CHEBI:49883"/>
        <label>3</label>
    </ligand>
</feature>
<feature type="binding site" evidence="2 8 9">
    <location>
        <position position="66"/>
    </location>
    <ligand>
        <name>[4Fe-4S] cluster</name>
        <dbReference type="ChEBI" id="CHEBI:49883"/>
        <label>3</label>
    </ligand>
</feature>
<feature type="binding site" evidence="2 8 9">
    <location>
        <position position="70"/>
    </location>
    <ligand>
        <name>[4Fe-4S] cluster</name>
        <dbReference type="ChEBI" id="CHEBI:49883"/>
        <label>4</label>
    </ligand>
</feature>
<feature type="binding site" evidence="2 8 9">
    <location>
        <position position="91"/>
    </location>
    <ligand>
        <name>[4Fe-4S] cluster</name>
        <dbReference type="ChEBI" id="CHEBI:49883"/>
        <label>4</label>
    </ligand>
</feature>
<feature type="binding site" evidence="2 8 9">
    <location>
        <position position="94"/>
    </location>
    <ligand>
        <name>[4Fe-4S] cluster</name>
        <dbReference type="ChEBI" id="CHEBI:49883"/>
        <label>4</label>
    </ligand>
</feature>
<feature type="binding site" evidence="2 8 9">
    <location>
        <position position="97"/>
    </location>
    <ligand>
        <name>[4Fe-4S] cluster</name>
        <dbReference type="ChEBI" id="CHEBI:49883"/>
        <label>4</label>
    </ligand>
</feature>
<feature type="binding site" evidence="2 8 9">
    <location>
        <position position="101"/>
    </location>
    <ligand>
        <name>[4Fe-4S] cluster</name>
        <dbReference type="ChEBI" id="CHEBI:49883"/>
        <label>3</label>
    </ligand>
</feature>
<feature type="binding site" evidence="2 8 9">
    <location>
        <position position="118"/>
    </location>
    <ligand>
        <name>[4Fe-4S] cluster</name>
        <dbReference type="ChEBI" id="CHEBI:49883"/>
        <label>2</label>
    </ligand>
</feature>
<feature type="binding site" evidence="2 8 9">
    <location>
        <position position="121"/>
    </location>
    <ligand>
        <name>[4Fe-4S] cluster</name>
        <dbReference type="ChEBI" id="CHEBI:49883"/>
        <label>2</label>
    </ligand>
</feature>
<feature type="binding site" evidence="2 8 9">
    <location>
        <position position="127"/>
    </location>
    <ligand>
        <name>[4Fe-4S] cluster</name>
        <dbReference type="ChEBI" id="CHEBI:49883"/>
        <label>2</label>
    </ligand>
</feature>
<feature type="binding site" evidence="2 8 9">
    <location>
        <position position="131"/>
    </location>
    <ligand>
        <name>[4Fe-4S] cluster</name>
        <dbReference type="ChEBI" id="CHEBI:49883"/>
        <label>1</label>
    </ligand>
</feature>